<reference key="1">
    <citation type="journal article" date="1985" name="J. Gen. Microbiol.">
        <title>Nucleotide sequence and complementation analysis of a polycistronic sporulation operon, spoVA, in Bacillus subtilis.</title>
        <authorList>
            <person name="Fort P."/>
            <person name="Errington J."/>
        </authorList>
    </citation>
    <scope>NUCLEOTIDE SEQUENCE [GENOMIC DNA]</scope>
</reference>
<reference key="2">
    <citation type="journal article" date="1996" name="Microbiology">
        <title>Systematic sequencing of the 283 kb 210 degrees-232 degrees region of the Bacillus subtilis genome containing the skin element and many sporulation genes.</title>
        <authorList>
            <person name="Mizuno M."/>
            <person name="Masuda S."/>
            <person name="Takemaru K."/>
            <person name="Hosono S."/>
            <person name="Sato T."/>
            <person name="Takeuchi M."/>
            <person name="Kobayashi Y."/>
        </authorList>
    </citation>
    <scope>NUCLEOTIDE SEQUENCE [GENOMIC DNA]</scope>
    <source>
        <strain>168 / JH642</strain>
    </source>
</reference>
<reference key="3">
    <citation type="journal article" date="1997" name="Nature">
        <title>The complete genome sequence of the Gram-positive bacterium Bacillus subtilis.</title>
        <authorList>
            <person name="Kunst F."/>
            <person name="Ogasawara N."/>
            <person name="Moszer I."/>
            <person name="Albertini A.M."/>
            <person name="Alloni G."/>
            <person name="Azevedo V."/>
            <person name="Bertero M.G."/>
            <person name="Bessieres P."/>
            <person name="Bolotin A."/>
            <person name="Borchert S."/>
            <person name="Borriss R."/>
            <person name="Boursier L."/>
            <person name="Brans A."/>
            <person name="Braun M."/>
            <person name="Brignell S.C."/>
            <person name="Bron S."/>
            <person name="Brouillet S."/>
            <person name="Bruschi C.V."/>
            <person name="Caldwell B."/>
            <person name="Capuano V."/>
            <person name="Carter N.M."/>
            <person name="Choi S.-K."/>
            <person name="Codani J.-J."/>
            <person name="Connerton I.F."/>
            <person name="Cummings N.J."/>
            <person name="Daniel R.A."/>
            <person name="Denizot F."/>
            <person name="Devine K.M."/>
            <person name="Duesterhoeft A."/>
            <person name="Ehrlich S.D."/>
            <person name="Emmerson P.T."/>
            <person name="Entian K.-D."/>
            <person name="Errington J."/>
            <person name="Fabret C."/>
            <person name="Ferrari E."/>
            <person name="Foulger D."/>
            <person name="Fritz C."/>
            <person name="Fujita M."/>
            <person name="Fujita Y."/>
            <person name="Fuma S."/>
            <person name="Galizzi A."/>
            <person name="Galleron N."/>
            <person name="Ghim S.-Y."/>
            <person name="Glaser P."/>
            <person name="Goffeau A."/>
            <person name="Golightly E.J."/>
            <person name="Grandi G."/>
            <person name="Guiseppi G."/>
            <person name="Guy B.J."/>
            <person name="Haga K."/>
            <person name="Haiech J."/>
            <person name="Harwood C.R."/>
            <person name="Henaut A."/>
            <person name="Hilbert H."/>
            <person name="Holsappel S."/>
            <person name="Hosono S."/>
            <person name="Hullo M.-F."/>
            <person name="Itaya M."/>
            <person name="Jones L.-M."/>
            <person name="Joris B."/>
            <person name="Karamata D."/>
            <person name="Kasahara Y."/>
            <person name="Klaerr-Blanchard M."/>
            <person name="Klein C."/>
            <person name="Kobayashi Y."/>
            <person name="Koetter P."/>
            <person name="Koningstein G."/>
            <person name="Krogh S."/>
            <person name="Kumano M."/>
            <person name="Kurita K."/>
            <person name="Lapidus A."/>
            <person name="Lardinois S."/>
            <person name="Lauber J."/>
            <person name="Lazarevic V."/>
            <person name="Lee S.-M."/>
            <person name="Levine A."/>
            <person name="Liu H."/>
            <person name="Masuda S."/>
            <person name="Mauel C."/>
            <person name="Medigue C."/>
            <person name="Medina N."/>
            <person name="Mellado R.P."/>
            <person name="Mizuno M."/>
            <person name="Moestl D."/>
            <person name="Nakai S."/>
            <person name="Noback M."/>
            <person name="Noone D."/>
            <person name="O'Reilly M."/>
            <person name="Ogawa K."/>
            <person name="Ogiwara A."/>
            <person name="Oudega B."/>
            <person name="Park S.-H."/>
            <person name="Parro V."/>
            <person name="Pohl T.M."/>
            <person name="Portetelle D."/>
            <person name="Porwollik S."/>
            <person name="Prescott A.M."/>
            <person name="Presecan E."/>
            <person name="Pujic P."/>
            <person name="Purnelle B."/>
            <person name="Rapoport G."/>
            <person name="Rey M."/>
            <person name="Reynolds S."/>
            <person name="Rieger M."/>
            <person name="Rivolta C."/>
            <person name="Rocha E."/>
            <person name="Roche B."/>
            <person name="Rose M."/>
            <person name="Sadaie Y."/>
            <person name="Sato T."/>
            <person name="Scanlan E."/>
            <person name="Schleich S."/>
            <person name="Schroeter R."/>
            <person name="Scoffone F."/>
            <person name="Sekiguchi J."/>
            <person name="Sekowska A."/>
            <person name="Seror S.J."/>
            <person name="Serror P."/>
            <person name="Shin B.-S."/>
            <person name="Soldo B."/>
            <person name="Sorokin A."/>
            <person name="Tacconi E."/>
            <person name="Takagi T."/>
            <person name="Takahashi H."/>
            <person name="Takemaru K."/>
            <person name="Takeuchi M."/>
            <person name="Tamakoshi A."/>
            <person name="Tanaka T."/>
            <person name="Terpstra P."/>
            <person name="Tognoni A."/>
            <person name="Tosato V."/>
            <person name="Uchiyama S."/>
            <person name="Vandenbol M."/>
            <person name="Vannier F."/>
            <person name="Vassarotti A."/>
            <person name="Viari A."/>
            <person name="Wambutt R."/>
            <person name="Wedler E."/>
            <person name="Wedler H."/>
            <person name="Weitzenegger T."/>
            <person name="Winters P."/>
            <person name="Wipat A."/>
            <person name="Yamamoto H."/>
            <person name="Yamane K."/>
            <person name="Yasumoto K."/>
            <person name="Yata K."/>
            <person name="Yoshida K."/>
            <person name="Yoshikawa H.-F."/>
            <person name="Zumstein E."/>
            <person name="Yoshikawa H."/>
            <person name="Danchin A."/>
        </authorList>
    </citation>
    <scope>NUCLEOTIDE SEQUENCE [LARGE SCALE GENOMIC DNA]</scope>
    <source>
        <strain>168</strain>
    </source>
</reference>
<proteinExistence type="predicted"/>
<protein>
    <recommendedName>
        <fullName>Stage V sporulation protein AC</fullName>
    </recommendedName>
</protein>
<gene>
    <name type="primary">spoVAC</name>
    <name type="ordered locus">BSU23420</name>
</gene>
<dbReference type="EMBL" id="M15349">
    <property type="status" value="NOT_ANNOTATED_CDS"/>
    <property type="molecule type" value="Genomic_DNA"/>
</dbReference>
<dbReference type="EMBL" id="D84432">
    <property type="protein sequence ID" value="BAA12658.1"/>
    <property type="molecule type" value="Genomic_DNA"/>
</dbReference>
<dbReference type="EMBL" id="AL009126">
    <property type="protein sequence ID" value="CAB14274.1"/>
    <property type="molecule type" value="Genomic_DNA"/>
</dbReference>
<dbReference type="PIR" id="F69714">
    <property type="entry name" value="F69714"/>
</dbReference>
<dbReference type="RefSeq" id="NP_390223.1">
    <property type="nucleotide sequence ID" value="NC_000964.3"/>
</dbReference>
<dbReference type="RefSeq" id="WP_003223947.1">
    <property type="nucleotide sequence ID" value="NZ_OZ025638.1"/>
</dbReference>
<dbReference type="FunCoup" id="P40868">
    <property type="interactions" value="88"/>
</dbReference>
<dbReference type="STRING" id="224308.BSU23420"/>
<dbReference type="TCDB" id="9.A.11.1.1">
    <property type="family name" value="the dipicolinic acid transporter (dpa-t) family"/>
</dbReference>
<dbReference type="PaxDb" id="224308-BSU23420"/>
<dbReference type="EnsemblBacteria" id="CAB14274">
    <property type="protein sequence ID" value="CAB14274"/>
    <property type="gene ID" value="BSU_23420"/>
</dbReference>
<dbReference type="GeneID" id="86873117"/>
<dbReference type="GeneID" id="938733"/>
<dbReference type="KEGG" id="bsu:BSU23420"/>
<dbReference type="PATRIC" id="fig|224308.179.peg.2552"/>
<dbReference type="eggNOG" id="ENOG5031DDD">
    <property type="taxonomic scope" value="Bacteria"/>
</dbReference>
<dbReference type="InParanoid" id="P40868"/>
<dbReference type="OrthoDB" id="9797988at2"/>
<dbReference type="PhylomeDB" id="P40868"/>
<dbReference type="BioCyc" id="BSUB:BSU23420-MONOMER"/>
<dbReference type="Proteomes" id="UP000001570">
    <property type="component" value="Chromosome"/>
</dbReference>
<dbReference type="GO" id="GO:0005886">
    <property type="term" value="C:plasma membrane"/>
    <property type="evidence" value="ECO:0007669"/>
    <property type="project" value="UniProtKB-SubCell"/>
</dbReference>
<dbReference type="GO" id="GO:0030435">
    <property type="term" value="P:sporulation resulting in formation of a cellular spore"/>
    <property type="evidence" value="ECO:0007669"/>
    <property type="project" value="UniProtKB-KW"/>
</dbReference>
<dbReference type="InterPro" id="IPR014203">
    <property type="entry name" value="Spore_V_AC"/>
</dbReference>
<dbReference type="InterPro" id="IPR005562">
    <property type="entry name" value="SpoVA"/>
</dbReference>
<dbReference type="NCBIfam" id="TIGR02838">
    <property type="entry name" value="spore_V_AC"/>
    <property type="match status" value="1"/>
</dbReference>
<dbReference type="PANTHER" id="PTHR38450:SF1">
    <property type="entry name" value="STAGE V SPORULATION PROTEIN AC"/>
    <property type="match status" value="1"/>
</dbReference>
<dbReference type="PANTHER" id="PTHR38450">
    <property type="entry name" value="STAGE V SPORULATION PROTEIN AC-RELATED"/>
    <property type="match status" value="1"/>
</dbReference>
<dbReference type="Pfam" id="PF03862">
    <property type="entry name" value="SpoVAC_SpoVAEB"/>
    <property type="match status" value="1"/>
</dbReference>
<accession>P40868</accession>
<feature type="chain" id="PRO_0000072080" description="Stage V sporulation protein AC">
    <location>
        <begin position="1"/>
        <end position="150"/>
    </location>
</feature>
<feature type="transmembrane region" description="Helical" evidence="1">
    <location>
        <begin position="30"/>
        <end position="50"/>
    </location>
</feature>
<feature type="transmembrane region" description="Helical" evidence="1">
    <location>
        <begin position="57"/>
        <end position="77"/>
    </location>
</feature>
<feature type="transmembrane region" description="Helical" evidence="1">
    <location>
        <begin position="84"/>
        <end position="104"/>
    </location>
</feature>
<feature type="transmembrane region" description="Helical" evidence="1">
    <location>
        <begin position="121"/>
        <end position="141"/>
    </location>
</feature>
<evidence type="ECO:0000255" key="1"/>
<evidence type="ECO:0000305" key="2"/>
<organism>
    <name type="scientific">Bacillus subtilis (strain 168)</name>
    <dbReference type="NCBI Taxonomy" id="224308"/>
    <lineage>
        <taxon>Bacteria</taxon>
        <taxon>Bacillati</taxon>
        <taxon>Bacillota</taxon>
        <taxon>Bacilli</taxon>
        <taxon>Bacillales</taxon>
        <taxon>Bacillaceae</taxon>
        <taxon>Bacillus</taxon>
    </lineage>
</organism>
<sequence length="150" mass="16109">MTNIKENYKSKVKTYQPKPPYVWNCVKAFLVGGLICAIGQGLQNFYIHFFDFNEKTAGNPTAATLILISALLTGFGIYDRIGQFAGAGSAVPVTGFANSMASAALEYKSEGLVLGVATNMFKLAGNVIVFGVVAAYIVGMIRFAFEKLMS</sequence>
<keyword id="KW-1003">Cell membrane</keyword>
<keyword id="KW-0472">Membrane</keyword>
<keyword id="KW-1185">Reference proteome</keyword>
<keyword id="KW-0749">Sporulation</keyword>
<keyword id="KW-0812">Transmembrane</keyword>
<keyword id="KW-1133">Transmembrane helix</keyword>
<comment type="subcellular location">
    <subcellularLocation>
        <location evidence="2">Cell membrane</location>
        <topology evidence="2">Multi-pass membrane protein</topology>
    </subcellularLocation>
</comment>
<name>SP5AC_BACSU</name>